<feature type="signal peptide" evidence="2">
    <location>
        <begin position="1"/>
        <end position="18"/>
    </location>
</feature>
<feature type="propeptide" id="PRO_0000407461" evidence="1">
    <location>
        <begin position="19"/>
        <end position="131"/>
    </location>
</feature>
<feature type="chain" id="PRO_0000407462" description="Carboxypeptidase Y homolog A">
    <location>
        <begin position="132"/>
        <end position="550"/>
    </location>
</feature>
<feature type="active site" evidence="3">
    <location>
        <position position="272"/>
    </location>
</feature>
<feature type="active site" evidence="3">
    <location>
        <position position="463"/>
    </location>
</feature>
<feature type="active site" evidence="3">
    <location>
        <position position="525"/>
    </location>
</feature>
<feature type="glycosylation site" description="N-linked (GlcNAc...) asparagine" evidence="2">
    <location>
        <position position="216"/>
    </location>
</feature>
<feature type="glycosylation site" description="N-linked (GlcNAc...) asparagine" evidence="2">
    <location>
        <position position="493"/>
    </location>
</feature>
<feature type="glycosylation site" description="N-linked (GlcNAc...) asparagine" evidence="2">
    <location>
        <position position="514"/>
    </location>
</feature>
<feature type="disulfide bond" evidence="1">
    <location>
        <begin position="185"/>
        <end position="424"/>
    </location>
</feature>
<feature type="disulfide bond" evidence="1">
    <location>
        <begin position="319"/>
        <end position="333"/>
    </location>
</feature>
<feature type="disulfide bond" evidence="1">
    <location>
        <begin position="343"/>
        <end position="366"/>
    </location>
</feature>
<feature type="disulfide bond" evidence="1">
    <location>
        <begin position="350"/>
        <end position="359"/>
    </location>
</feature>
<feature type="disulfide bond" evidence="1">
    <location>
        <begin position="388"/>
        <end position="394"/>
    </location>
</feature>
<accession>C1GXD8</accession>
<comment type="function">
    <text evidence="1">Vacuolar carboxypeptidase involved in degradation of small peptides. Digests preferentially peptides containing an aliphatic or hydrophobic residue in P1' position, as well as methionine, leucine or phenylalanine in P1 position of ester substrate (By similarity).</text>
</comment>
<comment type="catalytic activity">
    <reaction evidence="3">
        <text>Release of a C-terminal amino acid with broad specificity.</text>
        <dbReference type="EC" id="3.4.16.5"/>
    </reaction>
</comment>
<comment type="subcellular location">
    <subcellularLocation>
        <location evidence="1">Vacuole</location>
    </subcellularLocation>
</comment>
<comment type="similarity">
    <text evidence="4">Belongs to the peptidase S10 family.</text>
</comment>
<reference key="1">
    <citation type="journal article" date="2011" name="PLoS Genet.">
        <title>Comparative genomic analysis of human fungal pathogens causing paracoccidioidomycosis.</title>
        <authorList>
            <person name="Desjardins C.A."/>
            <person name="Champion M.D."/>
            <person name="Holder J.W."/>
            <person name="Muszewska A."/>
            <person name="Goldberg J."/>
            <person name="Bailao A.M."/>
            <person name="Brigido M.M."/>
            <person name="Ferreira M.E."/>
            <person name="Garcia A.M."/>
            <person name="Grynberg M."/>
            <person name="Gujja S."/>
            <person name="Heiman D.I."/>
            <person name="Henn M.R."/>
            <person name="Kodira C.D."/>
            <person name="Leon-Narvaez H."/>
            <person name="Longo L.V.G."/>
            <person name="Ma L.-J."/>
            <person name="Malavazi I."/>
            <person name="Matsuo A.L."/>
            <person name="Morais F.V."/>
            <person name="Pereira M."/>
            <person name="Rodriguez-Brito S."/>
            <person name="Sakthikumar S."/>
            <person name="Salem-Izacc S.M."/>
            <person name="Sykes S.M."/>
            <person name="Teixeira M.M."/>
            <person name="Vallejo M.C."/>
            <person name="Walter M.E."/>
            <person name="Yandava C."/>
            <person name="Young S."/>
            <person name="Zeng Q."/>
            <person name="Zucker J."/>
            <person name="Felipe M.S."/>
            <person name="Goldman G.H."/>
            <person name="Haas B.J."/>
            <person name="McEwen J.G."/>
            <person name="Nino-Vega G."/>
            <person name="Puccia R."/>
            <person name="San-Blas G."/>
            <person name="Soares C.M."/>
            <person name="Birren B.W."/>
            <person name="Cuomo C.A."/>
        </authorList>
    </citation>
    <scope>NUCLEOTIDE SEQUENCE [LARGE SCALE GENOMIC DNA]</scope>
    <source>
        <strain>ATCC MYA-826 / Pb01</strain>
    </source>
</reference>
<proteinExistence type="inferred from homology"/>
<name>CBPYA_PARBA</name>
<evidence type="ECO:0000250" key="1"/>
<evidence type="ECO:0000255" key="2"/>
<evidence type="ECO:0000255" key="3">
    <source>
        <dbReference type="PROSITE-ProRule" id="PRU10074"/>
    </source>
</evidence>
<evidence type="ECO:0000305" key="4"/>
<protein>
    <recommendedName>
        <fullName>Carboxypeptidase Y homolog A</fullName>
        <ecNumber>3.4.16.5</ecNumber>
    </recommendedName>
</protein>
<dbReference type="EC" id="3.4.16.5"/>
<dbReference type="EMBL" id="KN293998">
    <property type="protein sequence ID" value="EEH41226.1"/>
    <property type="molecule type" value="Genomic_DNA"/>
</dbReference>
<dbReference type="RefSeq" id="XP_002794967.1">
    <property type="nucleotide sequence ID" value="XM_002794921.2"/>
</dbReference>
<dbReference type="SMR" id="C1GXD8"/>
<dbReference type="STRING" id="502779.C1GXD8"/>
<dbReference type="ESTHER" id="parba-cbpya">
    <property type="family name" value="Carboxypeptidase_S10"/>
</dbReference>
<dbReference type="MEROPS" id="S10.001"/>
<dbReference type="GlyCosmos" id="C1GXD8">
    <property type="glycosylation" value="3 sites, No reported glycans"/>
</dbReference>
<dbReference type="GeneID" id="9098180"/>
<dbReference type="KEGG" id="pbl:PAAG_03512"/>
<dbReference type="VEuPathDB" id="FungiDB:PAAG_03512"/>
<dbReference type="eggNOG" id="KOG1282">
    <property type="taxonomic scope" value="Eukaryota"/>
</dbReference>
<dbReference type="HOGENOM" id="CLU_008523_10_4_1"/>
<dbReference type="OMA" id="GDWMKPF"/>
<dbReference type="OrthoDB" id="443318at2759"/>
<dbReference type="Proteomes" id="UP000002059">
    <property type="component" value="Partially assembled WGS sequence"/>
</dbReference>
<dbReference type="GO" id="GO:0000324">
    <property type="term" value="C:fungal-type vacuole"/>
    <property type="evidence" value="ECO:0007669"/>
    <property type="project" value="TreeGrafter"/>
</dbReference>
<dbReference type="GO" id="GO:0004185">
    <property type="term" value="F:serine-type carboxypeptidase activity"/>
    <property type="evidence" value="ECO:0007669"/>
    <property type="project" value="UniProtKB-EC"/>
</dbReference>
<dbReference type="GO" id="GO:0006508">
    <property type="term" value="P:proteolysis"/>
    <property type="evidence" value="ECO:0007669"/>
    <property type="project" value="UniProtKB-KW"/>
</dbReference>
<dbReference type="FunFam" id="1.10.287.410:FF:000001">
    <property type="entry name" value="Carboxypeptidase Y"/>
    <property type="match status" value="1"/>
</dbReference>
<dbReference type="Gene3D" id="1.10.287.410">
    <property type="match status" value="1"/>
</dbReference>
<dbReference type="Gene3D" id="3.40.50.1820">
    <property type="entry name" value="alpha/beta hydrolase"/>
    <property type="match status" value="1"/>
</dbReference>
<dbReference type="InterPro" id="IPR029058">
    <property type="entry name" value="AB_hydrolase_fold"/>
</dbReference>
<dbReference type="InterPro" id="IPR001563">
    <property type="entry name" value="Peptidase_S10"/>
</dbReference>
<dbReference type="InterPro" id="IPR018202">
    <property type="entry name" value="Ser_caboxypep_ser_AS"/>
</dbReference>
<dbReference type="PANTHER" id="PTHR11802:SF113">
    <property type="entry name" value="SERINE CARBOXYPEPTIDASE CTSA-4.1"/>
    <property type="match status" value="1"/>
</dbReference>
<dbReference type="PANTHER" id="PTHR11802">
    <property type="entry name" value="SERINE PROTEASE FAMILY S10 SERINE CARBOXYPEPTIDASE"/>
    <property type="match status" value="1"/>
</dbReference>
<dbReference type="Pfam" id="PF00450">
    <property type="entry name" value="Peptidase_S10"/>
    <property type="match status" value="1"/>
</dbReference>
<dbReference type="PRINTS" id="PR00724">
    <property type="entry name" value="CRBOXYPTASEC"/>
</dbReference>
<dbReference type="SUPFAM" id="SSF53474">
    <property type="entry name" value="alpha/beta-Hydrolases"/>
    <property type="match status" value="1"/>
</dbReference>
<dbReference type="PROSITE" id="PS00131">
    <property type="entry name" value="CARBOXYPEPT_SER_SER"/>
    <property type="match status" value="1"/>
</dbReference>
<gene>
    <name type="primary">CPYA</name>
    <name type="ORF">PAAG_03512</name>
</gene>
<organism>
    <name type="scientific">Paracoccidioides lutzii (strain ATCC MYA-826 / Pb01)</name>
    <name type="common">Paracoccidioides brasiliensis</name>
    <dbReference type="NCBI Taxonomy" id="502779"/>
    <lineage>
        <taxon>Eukaryota</taxon>
        <taxon>Fungi</taxon>
        <taxon>Dikarya</taxon>
        <taxon>Ascomycota</taxon>
        <taxon>Pezizomycotina</taxon>
        <taxon>Eurotiomycetes</taxon>
        <taxon>Eurotiomycetidae</taxon>
        <taxon>Onygenales</taxon>
        <taxon>Ajellomycetaceae</taxon>
        <taxon>Paracoccidioides</taxon>
    </lineage>
</organism>
<keyword id="KW-0121">Carboxypeptidase</keyword>
<keyword id="KW-1015">Disulfide bond</keyword>
<keyword id="KW-0325">Glycoprotein</keyword>
<keyword id="KW-0378">Hydrolase</keyword>
<keyword id="KW-0645">Protease</keyword>
<keyword id="KW-1185">Reference proteome</keyword>
<keyword id="KW-0732">Signal</keyword>
<keyword id="KW-0926">Vacuole</keyword>
<keyword id="KW-0865">Zymogen</keyword>
<sequence length="550" mass="62138">MKSLVLGLLVGSAIASGPLQHVLHAPPEPEPEPEPEPQVVKDPFEELRDTFDRLRNKAGDIWDDVMDNIPNIISNIRPPTIPPKKFTRLPDSEWTHIVRGADLEALWVDDESGYKHRKVDGKLAQYDLRIRAVDPSNLGIDNVKQYSGYLDDNLNDKHLFYWFFESRNDPDGDPVMLWLNGGPGCSSLTGMFFELGPSSITEDIKVKYNPYSWNSNSSIIFLDQPVNVGFSYSSQPVSDTVAAAKDIYALLTLFFTQFPQYSTQDFHIAGESYAGHYIPVIASEIMHHKDRNINLQSVMIGNGLTDPYTQYPLYRPMACGEGGYPNVLDSETCRSMDKALPRCLSMIKSCYDVESTFTCLPASIYCNNALIGPYQSTGRNPYDVRIDCKGNGLCYPQLNYITDYLNQPYVMKSLGVEVDSYESCNMDINRNFLLHGDWMKPYHRLVPYLLAQMPVLIYAGDADFICNWLGNKAWTEALEYPGHTKYAQSPMENLTMVNSEGINEIFGEVKSHSNLTFMRIFKAGHMTPFDTPQASLEFANSWLSGEWSEV</sequence>